<organism>
    <name type="scientific">Oryza sativa subsp. japonica</name>
    <name type="common">Rice</name>
    <dbReference type="NCBI Taxonomy" id="39947"/>
    <lineage>
        <taxon>Eukaryota</taxon>
        <taxon>Viridiplantae</taxon>
        <taxon>Streptophyta</taxon>
        <taxon>Embryophyta</taxon>
        <taxon>Tracheophyta</taxon>
        <taxon>Spermatophyta</taxon>
        <taxon>Magnoliopsida</taxon>
        <taxon>Liliopsida</taxon>
        <taxon>Poales</taxon>
        <taxon>Poaceae</taxon>
        <taxon>BOP clade</taxon>
        <taxon>Oryzoideae</taxon>
        <taxon>Oryzeae</taxon>
        <taxon>Oryzinae</taxon>
        <taxon>Oryza</taxon>
        <taxon>Oryza sativa</taxon>
    </lineage>
</organism>
<keyword id="KW-0067">ATP-binding</keyword>
<keyword id="KW-0150">Chloroplast</keyword>
<keyword id="KW-0418">Kinase</keyword>
<keyword id="KW-0547">Nucleotide-binding</keyword>
<keyword id="KW-0934">Plastid</keyword>
<keyword id="KW-1185">Reference proteome</keyword>
<keyword id="KW-0808">Transferase</keyword>
<keyword id="KW-0809">Transit peptide</keyword>
<feature type="transit peptide" description="Chloroplast" evidence="2">
    <location>
        <begin position="1"/>
        <end position="75"/>
    </location>
</feature>
<feature type="chain" id="PRO_0000430118" description="Probable adenylate kinase 5, chloroplastic">
    <location>
        <begin position="76"/>
        <end position="608"/>
    </location>
</feature>
<feature type="region of interest" description="Disordered" evidence="3">
    <location>
        <begin position="1"/>
        <end position="44"/>
    </location>
</feature>
<feature type="region of interest" description="NMP" evidence="1">
    <location>
        <begin position="119"/>
        <end position="148"/>
    </location>
</feature>
<feature type="region of interest" description="LID" evidence="1">
    <location>
        <begin position="212"/>
        <end position="245"/>
    </location>
</feature>
<feature type="compositionally biased region" description="Low complexity" evidence="3">
    <location>
        <begin position="1"/>
        <end position="20"/>
    </location>
</feature>
<feature type="binding site" evidence="1">
    <location>
        <begin position="99"/>
        <end position="104"/>
    </location>
    <ligand>
        <name>ATP</name>
        <dbReference type="ChEBI" id="CHEBI:30616"/>
    </ligand>
</feature>
<feature type="binding site" evidence="1">
    <location>
        <position position="120"/>
    </location>
    <ligand>
        <name>AMP</name>
        <dbReference type="ChEBI" id="CHEBI:456215"/>
    </ligand>
</feature>
<feature type="binding site" evidence="1">
    <location>
        <position position="125"/>
    </location>
    <ligand>
        <name>AMP</name>
        <dbReference type="ChEBI" id="CHEBI:456215"/>
    </ligand>
</feature>
<feature type="binding site" evidence="1">
    <location>
        <begin position="146"/>
        <end position="148"/>
    </location>
    <ligand>
        <name>AMP</name>
        <dbReference type="ChEBI" id="CHEBI:456215"/>
    </ligand>
</feature>
<feature type="binding site" evidence="1">
    <location>
        <begin position="175"/>
        <end position="178"/>
    </location>
    <ligand>
        <name>AMP</name>
        <dbReference type="ChEBI" id="CHEBI:456215"/>
    </ligand>
</feature>
<feature type="binding site" evidence="1">
    <location>
        <position position="182"/>
    </location>
    <ligand>
        <name>AMP</name>
        <dbReference type="ChEBI" id="CHEBI:456215"/>
    </ligand>
</feature>
<feature type="binding site" evidence="1">
    <location>
        <position position="209"/>
    </location>
    <ligand>
        <name>ATP</name>
        <dbReference type="ChEBI" id="CHEBI:30616"/>
    </ligand>
</feature>
<feature type="binding site" evidence="1">
    <location>
        <position position="213"/>
    </location>
    <ligand>
        <name>ATP</name>
        <dbReference type="ChEBI" id="CHEBI:30616"/>
    </ligand>
</feature>
<feature type="binding site" evidence="1">
    <location>
        <begin position="222"/>
        <end position="223"/>
    </location>
    <ligand>
        <name>ATP</name>
        <dbReference type="ChEBI" id="CHEBI:30616"/>
    </ligand>
</feature>
<feature type="binding site" evidence="1">
    <location>
        <position position="242"/>
    </location>
    <ligand>
        <name>AMP</name>
        <dbReference type="ChEBI" id="CHEBI:456215"/>
    </ligand>
</feature>
<feature type="binding site" evidence="1">
    <location>
        <position position="253"/>
    </location>
    <ligand>
        <name>AMP</name>
        <dbReference type="ChEBI" id="CHEBI:456215"/>
    </ligand>
</feature>
<proteinExistence type="evidence at transcript level"/>
<protein>
    <recommendedName>
        <fullName>Probable adenylate kinase 5, chloroplastic</fullName>
        <ecNumber>2.7.4.3</ecNumber>
    </recommendedName>
    <alternativeName>
        <fullName>Adenylate monophosphate kinase 5</fullName>
    </alternativeName>
</protein>
<evidence type="ECO:0000250" key="1">
    <source>
        <dbReference type="UniProtKB" id="P69441"/>
    </source>
</evidence>
<evidence type="ECO:0000255" key="2"/>
<evidence type="ECO:0000256" key="3">
    <source>
        <dbReference type="SAM" id="MobiDB-lite"/>
    </source>
</evidence>
<evidence type="ECO:0000305" key="4"/>
<sequence>MAASSSSSSPAAASAPFAAPGPHRRPGLALRPSPPTPPSSSLSCCRASPAAAAVSSVSATAAPNRGPRGMGLRCRASEGAAAAARKEAPLKVMISGAPASGKGTQCRMIVEKYGLVHISTGDLLRAEVSSGTEIGKKAKEYMDNGMLVPDQVVTDMVVSRLSQPDVRERGWLLDGYPRSYAQAQSLESMKIRPDIFIVLEVPDDILIDRCVGRRLDPETGKIYHIKNFPPENDEVSARLVTRSDDTFEKVKSRLDTYKQNSEAVIPTYSDLLNQIDGNRQVEVVFNEIDSLLQKICENASFNMLAKTNGKPQDSKDTTASKNEFRGIPTRLNNIPHSREIRKYFYNDVLVATRHAVEDKKTRLQIDINIPELNPEMDVYRIGTLMELVRELSLSFADDGKRVKVCVQGSMGQGAFAGIPLQLAGTRKILEIMDWGEYGAKGTFINFGAVGASEVDKEDDMFILIAPQNAVGNCIIDDMKAMTDAAGDRPVILVNPRLKDMPGSSGVMQTMGRDMRLKYAASFETCYSFRLLFYAGSFYPIMGALRMAYPNKYEIYRRVDEPNGQERYVLLEEFVEKPTPDEITNAFRPRKNENEKSASGFWGFLSGIL</sequence>
<accession>Q0J6P7</accession>
<accession>Q6Z5X4</accession>
<dbReference type="EC" id="2.7.4.3"/>
<dbReference type="EMBL" id="AP005097">
    <property type="protein sequence ID" value="BAD01341.1"/>
    <property type="status" value="ALT_SEQ"/>
    <property type="molecule type" value="Genomic_DNA"/>
</dbReference>
<dbReference type="EMBL" id="AP008214">
    <property type="protein sequence ID" value="BAF23368.2"/>
    <property type="status" value="ALT_SEQ"/>
    <property type="molecule type" value="Genomic_DNA"/>
</dbReference>
<dbReference type="EMBL" id="AP014964">
    <property type="status" value="NOT_ANNOTATED_CDS"/>
    <property type="molecule type" value="Genomic_DNA"/>
</dbReference>
<dbReference type="EMBL" id="AK070372">
    <property type="status" value="NOT_ANNOTATED_CDS"/>
    <property type="molecule type" value="mRNA"/>
</dbReference>
<dbReference type="RefSeq" id="XP_015648092.1">
    <property type="nucleotide sequence ID" value="XM_015792606.1"/>
</dbReference>
<dbReference type="SMR" id="Q0J6P7"/>
<dbReference type="FunCoup" id="Q0J6P7">
    <property type="interactions" value="1822"/>
</dbReference>
<dbReference type="STRING" id="39947.Q0J6P7"/>
<dbReference type="PaxDb" id="39947-Q0J6P7"/>
<dbReference type="KEGG" id="dosa:Os08g0288200"/>
<dbReference type="KEGG" id="osa:4345177"/>
<dbReference type="eggNOG" id="KOG3078">
    <property type="taxonomic scope" value="Eukaryota"/>
</dbReference>
<dbReference type="HOGENOM" id="CLU_032354_3_1_1"/>
<dbReference type="InParanoid" id="Q0J6P7"/>
<dbReference type="OrthoDB" id="439792at2759"/>
<dbReference type="Proteomes" id="UP000000763">
    <property type="component" value="Chromosome 8"/>
</dbReference>
<dbReference type="Proteomes" id="UP000059680">
    <property type="component" value="Chromosome 8"/>
</dbReference>
<dbReference type="GO" id="GO:0009507">
    <property type="term" value="C:chloroplast"/>
    <property type="evidence" value="ECO:0007669"/>
    <property type="project" value="UniProtKB-SubCell"/>
</dbReference>
<dbReference type="GO" id="GO:0005737">
    <property type="term" value="C:cytoplasm"/>
    <property type="evidence" value="ECO:0000318"/>
    <property type="project" value="GO_Central"/>
</dbReference>
<dbReference type="GO" id="GO:0004017">
    <property type="term" value="F:adenylate kinase activity"/>
    <property type="evidence" value="ECO:0000318"/>
    <property type="project" value="GO_Central"/>
</dbReference>
<dbReference type="GO" id="GO:0005524">
    <property type="term" value="F:ATP binding"/>
    <property type="evidence" value="ECO:0007669"/>
    <property type="project" value="UniProtKB-KW"/>
</dbReference>
<dbReference type="CDD" id="cd01428">
    <property type="entry name" value="ADK"/>
    <property type="match status" value="1"/>
</dbReference>
<dbReference type="FunFam" id="3.40.50.300:FF:001694">
    <property type="entry name" value="Adenylate kinase, chloroplastic"/>
    <property type="match status" value="1"/>
</dbReference>
<dbReference type="Gene3D" id="3.40.50.300">
    <property type="entry name" value="P-loop containing nucleotide triphosphate hydrolases"/>
    <property type="match status" value="1"/>
</dbReference>
<dbReference type="HAMAP" id="MF_00235">
    <property type="entry name" value="Adenylate_kinase_Adk"/>
    <property type="match status" value="1"/>
</dbReference>
<dbReference type="InterPro" id="IPR006259">
    <property type="entry name" value="Adenyl_kin_sub"/>
</dbReference>
<dbReference type="InterPro" id="IPR000850">
    <property type="entry name" value="Adenylat/UMP-CMP_kin"/>
</dbReference>
<dbReference type="InterPro" id="IPR033690">
    <property type="entry name" value="Adenylat_kinase_CS"/>
</dbReference>
<dbReference type="InterPro" id="IPR053021">
    <property type="entry name" value="Chloroplast_ADK"/>
</dbReference>
<dbReference type="InterPro" id="IPR018962">
    <property type="entry name" value="DUF1995"/>
</dbReference>
<dbReference type="InterPro" id="IPR027417">
    <property type="entry name" value="P-loop_NTPase"/>
</dbReference>
<dbReference type="NCBIfam" id="TIGR01351">
    <property type="entry name" value="adk"/>
    <property type="match status" value="1"/>
</dbReference>
<dbReference type="PANTHER" id="PTHR35509:SF6">
    <property type="entry name" value="ADENYLATE KINASE"/>
    <property type="match status" value="1"/>
</dbReference>
<dbReference type="PANTHER" id="PTHR35509">
    <property type="entry name" value="DOMAIN PROTEIN, PUTATIVE (DUF1995)-RELATED"/>
    <property type="match status" value="1"/>
</dbReference>
<dbReference type="Pfam" id="PF00406">
    <property type="entry name" value="ADK"/>
    <property type="match status" value="1"/>
</dbReference>
<dbReference type="Pfam" id="PF09353">
    <property type="entry name" value="DUF1995"/>
    <property type="match status" value="1"/>
</dbReference>
<dbReference type="PRINTS" id="PR00094">
    <property type="entry name" value="ADENYLTKNASE"/>
</dbReference>
<dbReference type="SUPFAM" id="SSF52540">
    <property type="entry name" value="P-loop containing nucleoside triphosphate hydrolases"/>
    <property type="match status" value="1"/>
</dbReference>
<dbReference type="PROSITE" id="PS00113">
    <property type="entry name" value="ADENYLATE_KINASE"/>
    <property type="match status" value="1"/>
</dbReference>
<name>KAD5_ORYSJ</name>
<gene>
    <name type="ordered locus">Os08g0288200</name>
    <name type="ordered locus">LOC_Os08g19140</name>
    <name type="ORF">B1114E07.12</name>
</gene>
<comment type="function">
    <text evidence="1">Catalyzes the reversible transfer of the terminal phosphate group between ATP and AMP. Plays an important role in cellular energy homeostasis and in adenine nucleotide metabolism.</text>
</comment>
<comment type="catalytic activity">
    <reaction evidence="1">
        <text>AMP + ATP = 2 ADP</text>
        <dbReference type="Rhea" id="RHEA:12973"/>
        <dbReference type="ChEBI" id="CHEBI:30616"/>
        <dbReference type="ChEBI" id="CHEBI:456215"/>
        <dbReference type="ChEBI" id="CHEBI:456216"/>
        <dbReference type="EC" id="2.7.4.3"/>
    </reaction>
</comment>
<comment type="subcellular location">
    <subcellularLocation>
        <location evidence="4">Plastid</location>
        <location evidence="4">Chloroplast</location>
    </subcellularLocation>
</comment>
<comment type="similarity">
    <text evidence="4">Belongs to the adenylate kinase family.</text>
</comment>
<comment type="sequence caution" evidence="4">
    <conflict type="erroneous gene model prediction">
        <sequence resource="EMBL-CDS" id="BAD01341"/>
    </conflict>
</comment>
<comment type="sequence caution" evidence="4">
    <conflict type="erroneous gene model prediction">
        <sequence resource="EMBL-CDS" id="BAF23368"/>
    </conflict>
</comment>
<reference key="1">
    <citation type="journal article" date="2005" name="Nature">
        <title>The map-based sequence of the rice genome.</title>
        <authorList>
            <consortium name="International rice genome sequencing project (IRGSP)"/>
        </authorList>
    </citation>
    <scope>NUCLEOTIDE SEQUENCE [LARGE SCALE GENOMIC DNA]</scope>
    <source>
        <strain>cv. Nipponbare</strain>
    </source>
</reference>
<reference key="2">
    <citation type="journal article" date="2008" name="Nucleic Acids Res.">
        <title>The rice annotation project database (RAP-DB): 2008 update.</title>
        <authorList>
            <consortium name="The rice annotation project (RAP)"/>
        </authorList>
    </citation>
    <scope>GENOME REANNOTATION</scope>
    <source>
        <strain>cv. Nipponbare</strain>
    </source>
</reference>
<reference key="3">
    <citation type="journal article" date="2013" name="Rice">
        <title>Improvement of the Oryza sativa Nipponbare reference genome using next generation sequence and optical map data.</title>
        <authorList>
            <person name="Kawahara Y."/>
            <person name="de la Bastide M."/>
            <person name="Hamilton J.P."/>
            <person name="Kanamori H."/>
            <person name="McCombie W.R."/>
            <person name="Ouyang S."/>
            <person name="Schwartz D.C."/>
            <person name="Tanaka T."/>
            <person name="Wu J."/>
            <person name="Zhou S."/>
            <person name="Childs K.L."/>
            <person name="Davidson R.M."/>
            <person name="Lin H."/>
            <person name="Quesada-Ocampo L."/>
            <person name="Vaillancourt B."/>
            <person name="Sakai H."/>
            <person name="Lee S.S."/>
            <person name="Kim J."/>
            <person name="Numa H."/>
            <person name="Itoh T."/>
            <person name="Buell C.R."/>
            <person name="Matsumoto T."/>
        </authorList>
    </citation>
    <scope>GENOME REANNOTATION</scope>
    <source>
        <strain>cv. Nipponbare</strain>
    </source>
</reference>
<reference key="4">
    <citation type="journal article" date="2003" name="Science">
        <title>Collection, mapping, and annotation of over 28,000 cDNA clones from japonica rice.</title>
        <authorList>
            <consortium name="The rice full-length cDNA consortium"/>
        </authorList>
    </citation>
    <scope>NUCLEOTIDE SEQUENCE [LARGE SCALE MRNA] OF 116-608</scope>
    <source>
        <strain>cv. Nipponbare</strain>
    </source>
</reference>